<evidence type="ECO:0000250" key="1">
    <source>
        <dbReference type="UniProtKB" id="P47031"/>
    </source>
</evidence>
<evidence type="ECO:0000256" key="2">
    <source>
        <dbReference type="SAM" id="MobiDB-lite"/>
    </source>
</evidence>
<evidence type="ECO:0000305" key="3"/>
<feature type="chain" id="PRO_0000333339" description="Inclusion body clearance protein iml2">
    <location>
        <begin position="1"/>
        <end position="721"/>
    </location>
</feature>
<feature type="region of interest" description="Disordered" evidence="2">
    <location>
        <begin position="177"/>
        <end position="199"/>
    </location>
</feature>
<gene>
    <name type="primary">iml2</name>
    <name type="ORF">ACLA_025180</name>
</gene>
<proteinExistence type="inferred from homology"/>
<sequence>MFRVGSWLYGKKPANASTQSLDSLVELRDPATLILNDDVDGAEDGLAEGTSSFHNLGRGVVAFIRATLGFEQDIMRQASERLNEAETTASVDQHRAQHNSQAPNTYHSAMYTPGTEFALCQAMAQLMGAVVGVLNESLTESIKGFYRLRKAYITLDAILKMEQKYLQESRMATPIESAAPGSIPLSMKRQGSSNLQSSSSSISSAKIKKAASSATTLAAPVENTDLSERLTGLNLSSETLAPGDVKEASTLGPADMLNHDPDSDIFHNQIDIFVHSGSNFCFGILLLLISMVPPAFSKLLSIIGFHGDKERGLRMLWQASKFHNLIGAIAAFSVLGYYNGFVRYCDIMPDSIPGQDEDVQGYPQERLELLLAKMRKQFPKSQLWVLEESRMCGANKNLDRALELLCGGESSPLKQVEALRLFERSLNAMYLHKYELCAASFLECFELNTWSRSLYYYITGSCHLSLYRNALDKDPAKAAEHAELAEKYFRLAPPLAGKKRFMARQLPFDVFVARKVAKWEARAKDWKVPLVDAVGVDPIEEMIFFWNGHSRMTDEHLLESLQKLAWCESSANKTWSREGPEEKAILKLLRAAVFRSLRKHSQAKDLLEDILSQDRNLFKGHLKDDWICPVAHFEMAANMWMERPTYIAIHGGSKEFTDPEATEPADSSKSLEYEREKVHKCKEYLEKAAKWESYELDARIGLKVTAAMEAVQKWENTHPPA</sequence>
<reference key="1">
    <citation type="journal article" date="2008" name="PLoS Genet.">
        <title>Genomic islands in the pathogenic filamentous fungus Aspergillus fumigatus.</title>
        <authorList>
            <person name="Fedorova N.D."/>
            <person name="Khaldi N."/>
            <person name="Joardar V.S."/>
            <person name="Maiti R."/>
            <person name="Amedeo P."/>
            <person name="Anderson M.J."/>
            <person name="Crabtree J."/>
            <person name="Silva J.C."/>
            <person name="Badger J.H."/>
            <person name="Albarraq A."/>
            <person name="Angiuoli S."/>
            <person name="Bussey H."/>
            <person name="Bowyer P."/>
            <person name="Cotty P.J."/>
            <person name="Dyer P.S."/>
            <person name="Egan A."/>
            <person name="Galens K."/>
            <person name="Fraser-Liggett C.M."/>
            <person name="Haas B.J."/>
            <person name="Inman J.M."/>
            <person name="Kent R."/>
            <person name="Lemieux S."/>
            <person name="Malavazi I."/>
            <person name="Orvis J."/>
            <person name="Roemer T."/>
            <person name="Ronning C.M."/>
            <person name="Sundaram J.P."/>
            <person name="Sutton G."/>
            <person name="Turner G."/>
            <person name="Venter J.C."/>
            <person name="White O.R."/>
            <person name="Whitty B.R."/>
            <person name="Youngman P."/>
            <person name="Wolfe K.H."/>
            <person name="Goldman G.H."/>
            <person name="Wortman J.R."/>
            <person name="Jiang B."/>
            <person name="Denning D.W."/>
            <person name="Nierman W.C."/>
        </authorList>
    </citation>
    <scope>NUCLEOTIDE SEQUENCE [LARGE SCALE GENOMIC DNA]</scope>
    <source>
        <strain>ATCC 1007 / CBS 513.65 / DSM 816 / NCTC 3887 / NRRL 1 / QM 1276 / 107</strain>
    </source>
</reference>
<dbReference type="EMBL" id="DS027059">
    <property type="protein sequence ID" value="EAW07801.1"/>
    <property type="molecule type" value="Genomic_DNA"/>
</dbReference>
<dbReference type="RefSeq" id="XP_001269227.1">
    <property type="nucleotide sequence ID" value="XM_001269226.1"/>
</dbReference>
<dbReference type="EnsemblFungi" id="EAW07801">
    <property type="protein sequence ID" value="EAW07801"/>
    <property type="gene ID" value="ACLA_025180"/>
</dbReference>
<dbReference type="GeneID" id="4701463"/>
<dbReference type="KEGG" id="act:ACLA_025180"/>
<dbReference type="VEuPathDB" id="FungiDB:ACLA_025180"/>
<dbReference type="eggNOG" id="KOG3783">
    <property type="taxonomic scope" value="Eukaryota"/>
</dbReference>
<dbReference type="HOGENOM" id="CLU_014926_1_0_1"/>
<dbReference type="OMA" id="WNGYNRM"/>
<dbReference type="OrthoDB" id="2154985at2759"/>
<dbReference type="Proteomes" id="UP000006701">
    <property type="component" value="Unassembled WGS sequence"/>
</dbReference>
<dbReference type="GO" id="GO:0005829">
    <property type="term" value="C:cytosol"/>
    <property type="evidence" value="ECO:0007669"/>
    <property type="project" value="TreeGrafter"/>
</dbReference>
<dbReference type="GO" id="GO:0005741">
    <property type="term" value="C:mitochondrial outer membrane"/>
    <property type="evidence" value="ECO:0007669"/>
    <property type="project" value="TreeGrafter"/>
</dbReference>
<dbReference type="GO" id="GO:0005634">
    <property type="term" value="C:nucleus"/>
    <property type="evidence" value="ECO:0007669"/>
    <property type="project" value="UniProtKB-SubCell"/>
</dbReference>
<dbReference type="InterPro" id="IPR019412">
    <property type="entry name" value="Iml2/TPR_39"/>
</dbReference>
<dbReference type="PANTHER" id="PTHR31859">
    <property type="entry name" value="TETRATRICOPEPTIDE REPEAT PROTEIN 39 FAMILY MEMBER"/>
    <property type="match status" value="1"/>
</dbReference>
<dbReference type="PANTHER" id="PTHR31859:SF1">
    <property type="entry name" value="TETRATRICOPEPTIDE REPEAT PROTEIN 39C"/>
    <property type="match status" value="1"/>
</dbReference>
<dbReference type="Pfam" id="PF10300">
    <property type="entry name" value="Iml2-TPR_39"/>
    <property type="match status" value="1"/>
</dbReference>
<organism>
    <name type="scientific">Aspergillus clavatus (strain ATCC 1007 / CBS 513.65 / DSM 816 / NCTC 3887 / NRRL 1 / QM 1276 / 107)</name>
    <dbReference type="NCBI Taxonomy" id="344612"/>
    <lineage>
        <taxon>Eukaryota</taxon>
        <taxon>Fungi</taxon>
        <taxon>Dikarya</taxon>
        <taxon>Ascomycota</taxon>
        <taxon>Pezizomycotina</taxon>
        <taxon>Eurotiomycetes</taxon>
        <taxon>Eurotiomycetidae</taxon>
        <taxon>Eurotiales</taxon>
        <taxon>Aspergillaceae</taxon>
        <taxon>Aspergillus</taxon>
        <taxon>Aspergillus subgen. Fumigati</taxon>
    </lineage>
</organism>
<keyword id="KW-0963">Cytoplasm</keyword>
<keyword id="KW-0539">Nucleus</keyword>
<keyword id="KW-0597">Phosphoprotein</keyword>
<keyword id="KW-1185">Reference proteome</keyword>
<protein>
    <recommendedName>
        <fullName>Inclusion body clearance protein iml2</fullName>
    </recommendedName>
</protein>
<comment type="function">
    <text evidence="1">Inclusion body (IB) resident protein that interacts strongly with lipid droplet (LD) proteins. Involved in LD-mediated IB clearing after protein folding stress, probably by enabling access to the IBs of an LD-stored soluble sterol derivative that acts as a chaperone in inclusion clearing.</text>
</comment>
<comment type="subunit">
    <text evidence="1">Interacts with lipid droplet proteins.</text>
</comment>
<comment type="subcellular location">
    <subcellularLocation>
        <location evidence="1">Cytoplasm</location>
    </subcellularLocation>
    <subcellularLocation>
        <location evidence="1">Nucleus</location>
    </subcellularLocation>
    <text evidence="1">Localized exclusively in cytoplasmic inclusion bodies under protein folding stress conditions.</text>
</comment>
<comment type="similarity">
    <text evidence="3">Belongs to the IML2 family.</text>
</comment>
<accession>A1CQ80</accession>
<name>IML2_ASPCL</name>